<reference key="1">
    <citation type="journal article" date="2004" name="Nat. Genet.">
        <title>Evidence in the Legionella pneumophila genome for exploitation of host cell functions and high genome plasticity.</title>
        <authorList>
            <person name="Cazalet C."/>
            <person name="Rusniok C."/>
            <person name="Brueggemann H."/>
            <person name="Zidane N."/>
            <person name="Magnier A."/>
            <person name="Ma L."/>
            <person name="Tichit M."/>
            <person name="Jarraud S."/>
            <person name="Bouchier C."/>
            <person name="Vandenesch F."/>
            <person name="Kunst F."/>
            <person name="Etienne J."/>
            <person name="Glaser P."/>
            <person name="Buchrieser C."/>
        </authorList>
    </citation>
    <scope>NUCLEOTIDE SEQUENCE [LARGE SCALE GENOMIC DNA]</scope>
    <source>
        <strain>Paris</strain>
    </source>
</reference>
<feature type="chain" id="PRO_0000193286" description="Ubiquinone/menaquinone biosynthesis C-methyltransferase UbiE">
    <location>
        <begin position="1"/>
        <end position="250"/>
    </location>
</feature>
<feature type="binding site" evidence="1">
    <location>
        <position position="73"/>
    </location>
    <ligand>
        <name>S-adenosyl-L-methionine</name>
        <dbReference type="ChEBI" id="CHEBI:59789"/>
    </ligand>
</feature>
<feature type="binding site" evidence="1">
    <location>
        <position position="94"/>
    </location>
    <ligand>
        <name>S-adenosyl-L-methionine</name>
        <dbReference type="ChEBI" id="CHEBI:59789"/>
    </ligand>
</feature>
<feature type="binding site" evidence="1">
    <location>
        <begin position="122"/>
        <end position="123"/>
    </location>
    <ligand>
        <name>S-adenosyl-L-methionine</name>
        <dbReference type="ChEBI" id="CHEBI:59789"/>
    </ligand>
</feature>
<accession>Q5X0X6</accession>
<dbReference type="EC" id="2.1.1.163" evidence="1"/>
<dbReference type="EC" id="2.1.1.201" evidence="1"/>
<dbReference type="EMBL" id="CR628336">
    <property type="protein sequence ID" value="CAH14123.1"/>
    <property type="molecule type" value="Genomic_DNA"/>
</dbReference>
<dbReference type="RefSeq" id="WP_014844943.1">
    <property type="nucleotide sequence ID" value="NC_006368.1"/>
</dbReference>
<dbReference type="SMR" id="Q5X0X6"/>
<dbReference type="KEGG" id="lpp:lpp2970"/>
<dbReference type="LegioList" id="lpp2970"/>
<dbReference type="HOGENOM" id="CLU_037990_0_0_6"/>
<dbReference type="UniPathway" id="UPA00079">
    <property type="reaction ID" value="UER00169"/>
</dbReference>
<dbReference type="UniPathway" id="UPA00232"/>
<dbReference type="GO" id="GO:0008425">
    <property type="term" value="F:2-methoxy-6-polyprenyl-1,4-benzoquinol methyltransferase activity"/>
    <property type="evidence" value="ECO:0007669"/>
    <property type="project" value="UniProtKB-UniRule"/>
</dbReference>
<dbReference type="GO" id="GO:0043770">
    <property type="term" value="F:demethylmenaquinone methyltransferase activity"/>
    <property type="evidence" value="ECO:0007669"/>
    <property type="project" value="UniProtKB-UniRule"/>
</dbReference>
<dbReference type="GO" id="GO:0009060">
    <property type="term" value="P:aerobic respiration"/>
    <property type="evidence" value="ECO:0007669"/>
    <property type="project" value="UniProtKB-UniRule"/>
</dbReference>
<dbReference type="GO" id="GO:0009234">
    <property type="term" value="P:menaquinone biosynthetic process"/>
    <property type="evidence" value="ECO:0007669"/>
    <property type="project" value="UniProtKB-UniRule"/>
</dbReference>
<dbReference type="GO" id="GO:0032259">
    <property type="term" value="P:methylation"/>
    <property type="evidence" value="ECO:0007669"/>
    <property type="project" value="UniProtKB-KW"/>
</dbReference>
<dbReference type="CDD" id="cd02440">
    <property type="entry name" value="AdoMet_MTases"/>
    <property type="match status" value="1"/>
</dbReference>
<dbReference type="Gene3D" id="3.40.50.150">
    <property type="entry name" value="Vaccinia Virus protein VP39"/>
    <property type="match status" value="1"/>
</dbReference>
<dbReference type="HAMAP" id="MF_01813">
    <property type="entry name" value="MenG_UbiE_methyltr"/>
    <property type="match status" value="1"/>
</dbReference>
<dbReference type="InterPro" id="IPR029063">
    <property type="entry name" value="SAM-dependent_MTases_sf"/>
</dbReference>
<dbReference type="InterPro" id="IPR004033">
    <property type="entry name" value="UbiE/COQ5_MeTrFase"/>
</dbReference>
<dbReference type="InterPro" id="IPR023576">
    <property type="entry name" value="UbiE/COQ5_MeTrFase_CS"/>
</dbReference>
<dbReference type="NCBIfam" id="TIGR01934">
    <property type="entry name" value="MenG_MenH_UbiE"/>
    <property type="match status" value="1"/>
</dbReference>
<dbReference type="NCBIfam" id="NF001240">
    <property type="entry name" value="PRK00216.1-1"/>
    <property type="match status" value="1"/>
</dbReference>
<dbReference type="NCBIfam" id="NF001244">
    <property type="entry name" value="PRK00216.1-5"/>
    <property type="match status" value="1"/>
</dbReference>
<dbReference type="PANTHER" id="PTHR43591:SF24">
    <property type="entry name" value="2-METHOXY-6-POLYPRENYL-1,4-BENZOQUINOL METHYLASE, MITOCHONDRIAL"/>
    <property type="match status" value="1"/>
</dbReference>
<dbReference type="PANTHER" id="PTHR43591">
    <property type="entry name" value="METHYLTRANSFERASE"/>
    <property type="match status" value="1"/>
</dbReference>
<dbReference type="Pfam" id="PF01209">
    <property type="entry name" value="Ubie_methyltran"/>
    <property type="match status" value="1"/>
</dbReference>
<dbReference type="SUPFAM" id="SSF53335">
    <property type="entry name" value="S-adenosyl-L-methionine-dependent methyltransferases"/>
    <property type="match status" value="1"/>
</dbReference>
<dbReference type="PROSITE" id="PS51608">
    <property type="entry name" value="SAM_MT_UBIE"/>
    <property type="match status" value="1"/>
</dbReference>
<dbReference type="PROSITE" id="PS01183">
    <property type="entry name" value="UBIE_1"/>
    <property type="match status" value="1"/>
</dbReference>
<dbReference type="PROSITE" id="PS01184">
    <property type="entry name" value="UBIE_2"/>
    <property type="match status" value="1"/>
</dbReference>
<proteinExistence type="inferred from homology"/>
<gene>
    <name evidence="1" type="primary">ubiE</name>
    <name type="ordered locus">lpp2970</name>
</gene>
<sequence length="250" mass="28335">MTNQKQTTHFGFKSVDWNEKEKKVAEVFHSVAKNYDRMNDLMSLGIHHLWKRYTIELSHVRPGQSVLDLAGGSGDLTRLLSQKVGDSGQVVLADINAAMLHVGRDRLLDEGLFKNIRYVQGNAQCLPFADNSFHCITMGFGLRNVTDKDEALQSMYRVCKPGGKLMVLEFSTPVFPGLKPVYDWYSFNILPKIGKFVANDEASYQYLAESIRMHPDQETLKAMIERVGFEDCHYHNLSGGIVALHIAYKY</sequence>
<organism>
    <name type="scientific">Legionella pneumophila (strain Paris)</name>
    <dbReference type="NCBI Taxonomy" id="297246"/>
    <lineage>
        <taxon>Bacteria</taxon>
        <taxon>Pseudomonadati</taxon>
        <taxon>Pseudomonadota</taxon>
        <taxon>Gammaproteobacteria</taxon>
        <taxon>Legionellales</taxon>
        <taxon>Legionellaceae</taxon>
        <taxon>Legionella</taxon>
    </lineage>
</organism>
<keyword id="KW-0474">Menaquinone biosynthesis</keyword>
<keyword id="KW-0489">Methyltransferase</keyword>
<keyword id="KW-0949">S-adenosyl-L-methionine</keyword>
<keyword id="KW-0808">Transferase</keyword>
<keyword id="KW-0831">Ubiquinone biosynthesis</keyword>
<comment type="function">
    <text evidence="1">Methyltransferase required for the conversion of demethylmenaquinol (DMKH2) to menaquinol (MKH2) and the conversion of 2-polyprenyl-6-methoxy-1,4-benzoquinol (DDMQH2) to 2-polyprenyl-3-methyl-6-methoxy-1,4-benzoquinol (DMQH2).</text>
</comment>
<comment type="catalytic activity">
    <reaction evidence="1">
        <text>a 2-demethylmenaquinol + S-adenosyl-L-methionine = a menaquinol + S-adenosyl-L-homocysteine + H(+)</text>
        <dbReference type="Rhea" id="RHEA:42640"/>
        <dbReference type="Rhea" id="RHEA-COMP:9539"/>
        <dbReference type="Rhea" id="RHEA-COMP:9563"/>
        <dbReference type="ChEBI" id="CHEBI:15378"/>
        <dbReference type="ChEBI" id="CHEBI:18151"/>
        <dbReference type="ChEBI" id="CHEBI:55437"/>
        <dbReference type="ChEBI" id="CHEBI:57856"/>
        <dbReference type="ChEBI" id="CHEBI:59789"/>
        <dbReference type="EC" id="2.1.1.163"/>
    </reaction>
</comment>
<comment type="catalytic activity">
    <reaction evidence="1">
        <text>a 2-methoxy-6-(all-trans-polyprenyl)benzene-1,4-diol + S-adenosyl-L-methionine = a 5-methoxy-2-methyl-3-(all-trans-polyprenyl)benzene-1,4-diol + S-adenosyl-L-homocysteine + H(+)</text>
        <dbReference type="Rhea" id="RHEA:28286"/>
        <dbReference type="Rhea" id="RHEA-COMP:10858"/>
        <dbReference type="Rhea" id="RHEA-COMP:10859"/>
        <dbReference type="ChEBI" id="CHEBI:15378"/>
        <dbReference type="ChEBI" id="CHEBI:57856"/>
        <dbReference type="ChEBI" id="CHEBI:59789"/>
        <dbReference type="ChEBI" id="CHEBI:84166"/>
        <dbReference type="ChEBI" id="CHEBI:84167"/>
        <dbReference type="EC" id="2.1.1.201"/>
    </reaction>
</comment>
<comment type="pathway">
    <text evidence="1">Quinol/quinone metabolism; menaquinone biosynthesis; menaquinol from 1,4-dihydroxy-2-naphthoate: step 2/2.</text>
</comment>
<comment type="pathway">
    <text evidence="1">Cofactor biosynthesis; ubiquinone biosynthesis.</text>
</comment>
<comment type="similarity">
    <text evidence="1">Belongs to the class I-like SAM-binding methyltransferase superfamily. MenG/UbiE family.</text>
</comment>
<protein>
    <recommendedName>
        <fullName evidence="1">Ubiquinone/menaquinone biosynthesis C-methyltransferase UbiE</fullName>
        <ecNumber evidence="1">2.1.1.163</ecNumber>
        <ecNumber evidence="1">2.1.1.201</ecNumber>
    </recommendedName>
    <alternativeName>
        <fullName evidence="1">2-methoxy-6-polyprenyl-1,4-benzoquinol methylase</fullName>
    </alternativeName>
    <alternativeName>
        <fullName evidence="1">Demethylmenaquinone methyltransferase</fullName>
    </alternativeName>
</protein>
<name>UBIE_LEGPA</name>
<evidence type="ECO:0000255" key="1">
    <source>
        <dbReference type="HAMAP-Rule" id="MF_01813"/>
    </source>
</evidence>